<dbReference type="EC" id="2.7.11.5" evidence="1"/>
<dbReference type="EC" id="3.1.3.-" evidence="1"/>
<dbReference type="EMBL" id="CP000378">
    <property type="protein sequence ID" value="ABF77213.1"/>
    <property type="molecule type" value="Genomic_DNA"/>
</dbReference>
<dbReference type="SMR" id="Q1BT42"/>
<dbReference type="HOGENOM" id="CLU_033804_1_1_4"/>
<dbReference type="GO" id="GO:0005737">
    <property type="term" value="C:cytoplasm"/>
    <property type="evidence" value="ECO:0007669"/>
    <property type="project" value="UniProtKB-SubCell"/>
</dbReference>
<dbReference type="GO" id="GO:0008772">
    <property type="term" value="F:[isocitrate dehydrogenase (NADP+)] kinase activity"/>
    <property type="evidence" value="ECO:0007669"/>
    <property type="project" value="UniProtKB-UniRule"/>
</dbReference>
<dbReference type="GO" id="GO:0016208">
    <property type="term" value="F:AMP binding"/>
    <property type="evidence" value="ECO:0007669"/>
    <property type="project" value="TreeGrafter"/>
</dbReference>
<dbReference type="GO" id="GO:0005524">
    <property type="term" value="F:ATP binding"/>
    <property type="evidence" value="ECO:0007669"/>
    <property type="project" value="UniProtKB-UniRule"/>
</dbReference>
<dbReference type="GO" id="GO:0004721">
    <property type="term" value="F:phosphoprotein phosphatase activity"/>
    <property type="evidence" value="ECO:0007669"/>
    <property type="project" value="UniProtKB-KW"/>
</dbReference>
<dbReference type="GO" id="GO:0004674">
    <property type="term" value="F:protein serine/threonine kinase activity"/>
    <property type="evidence" value="ECO:0007669"/>
    <property type="project" value="UniProtKB-KW"/>
</dbReference>
<dbReference type="GO" id="GO:0006006">
    <property type="term" value="P:glucose metabolic process"/>
    <property type="evidence" value="ECO:0007669"/>
    <property type="project" value="InterPro"/>
</dbReference>
<dbReference type="GO" id="GO:0006097">
    <property type="term" value="P:glyoxylate cycle"/>
    <property type="evidence" value="ECO:0007669"/>
    <property type="project" value="UniProtKB-UniRule"/>
</dbReference>
<dbReference type="GO" id="GO:0006099">
    <property type="term" value="P:tricarboxylic acid cycle"/>
    <property type="evidence" value="ECO:0007669"/>
    <property type="project" value="UniProtKB-UniRule"/>
</dbReference>
<dbReference type="HAMAP" id="MF_00747">
    <property type="entry name" value="AceK"/>
    <property type="match status" value="1"/>
</dbReference>
<dbReference type="InterPro" id="IPR046855">
    <property type="entry name" value="AceK_kinase"/>
</dbReference>
<dbReference type="InterPro" id="IPR046854">
    <property type="entry name" value="AceK_regulatory"/>
</dbReference>
<dbReference type="InterPro" id="IPR010452">
    <property type="entry name" value="Isocitrate_DH_AceK"/>
</dbReference>
<dbReference type="NCBIfam" id="NF002804">
    <property type="entry name" value="PRK02946.1"/>
    <property type="match status" value="1"/>
</dbReference>
<dbReference type="PANTHER" id="PTHR39559">
    <property type="match status" value="1"/>
</dbReference>
<dbReference type="PANTHER" id="PTHR39559:SF1">
    <property type="entry name" value="ISOCITRATE DEHYDROGENASE KINASE_PHOSPHATASE"/>
    <property type="match status" value="1"/>
</dbReference>
<dbReference type="Pfam" id="PF06315">
    <property type="entry name" value="AceK_kinase"/>
    <property type="match status" value="1"/>
</dbReference>
<dbReference type="Pfam" id="PF20423">
    <property type="entry name" value="AceK_regulatory"/>
    <property type="match status" value="1"/>
</dbReference>
<dbReference type="PIRSF" id="PIRSF000719">
    <property type="entry name" value="AceK"/>
    <property type="match status" value="1"/>
</dbReference>
<accession>Q1BT42</accession>
<protein>
    <recommendedName>
        <fullName evidence="1">Isocitrate dehydrogenase kinase/phosphatase</fullName>
        <shortName evidence="1">IDH kinase/phosphatase</shortName>
        <shortName evidence="1">IDHK/P</shortName>
        <ecNumber evidence="1">2.7.11.5</ecNumber>
        <ecNumber evidence="1">3.1.3.-</ecNumber>
    </recommendedName>
</protein>
<gene>
    <name evidence="1" type="primary">aceK</name>
    <name type="ordered locus">Bcen_2312</name>
</gene>
<feature type="chain" id="PRO_0000259145" description="Isocitrate dehydrogenase kinase/phosphatase">
    <location>
        <begin position="1"/>
        <end position="605"/>
    </location>
</feature>
<feature type="active site" evidence="1">
    <location>
        <position position="383"/>
    </location>
</feature>
<feature type="binding site" evidence="1">
    <location>
        <begin position="327"/>
        <end position="333"/>
    </location>
    <ligand>
        <name>ATP</name>
        <dbReference type="ChEBI" id="CHEBI:30616"/>
    </ligand>
</feature>
<feature type="binding site" evidence="1">
    <location>
        <position position="348"/>
    </location>
    <ligand>
        <name>ATP</name>
        <dbReference type="ChEBI" id="CHEBI:30616"/>
    </ligand>
</feature>
<keyword id="KW-0067">ATP-binding</keyword>
<keyword id="KW-0963">Cytoplasm</keyword>
<keyword id="KW-0329">Glyoxylate bypass</keyword>
<keyword id="KW-0378">Hydrolase</keyword>
<keyword id="KW-0418">Kinase</keyword>
<keyword id="KW-0547">Nucleotide-binding</keyword>
<keyword id="KW-0904">Protein phosphatase</keyword>
<keyword id="KW-0723">Serine/threonine-protein kinase</keyword>
<keyword id="KW-0808">Transferase</keyword>
<keyword id="KW-0816">Tricarboxylic acid cycle</keyword>
<name>ACEK_BURO1</name>
<reference key="1">
    <citation type="submission" date="2006-05" db="EMBL/GenBank/DDBJ databases">
        <title>Complete sequence of chromosome 1 of Burkholderia cenocepacia AU 1054.</title>
        <authorList>
            <consortium name="US DOE Joint Genome Institute"/>
            <person name="Copeland A."/>
            <person name="Lucas S."/>
            <person name="Lapidus A."/>
            <person name="Barry K."/>
            <person name="Detter J.C."/>
            <person name="Glavina del Rio T."/>
            <person name="Hammon N."/>
            <person name="Israni S."/>
            <person name="Dalin E."/>
            <person name="Tice H."/>
            <person name="Pitluck S."/>
            <person name="Chain P."/>
            <person name="Malfatti S."/>
            <person name="Shin M."/>
            <person name="Vergez L."/>
            <person name="Schmutz J."/>
            <person name="Larimer F."/>
            <person name="Land M."/>
            <person name="Hauser L."/>
            <person name="Kyrpides N."/>
            <person name="Lykidis A."/>
            <person name="LiPuma J.J."/>
            <person name="Konstantinidis K."/>
            <person name="Tiedje J.M."/>
            <person name="Richardson P."/>
        </authorList>
    </citation>
    <scope>NUCLEOTIDE SEQUENCE [LARGE SCALE GENOMIC DNA]</scope>
    <source>
        <strain>AU 1054</strain>
    </source>
</reference>
<comment type="function">
    <text evidence="1">Bifunctional enzyme which can phosphorylate or dephosphorylate isocitrate dehydrogenase (IDH) on a specific serine residue. This is a regulatory mechanism which enables bacteria to bypass the Krebs cycle via the glyoxylate shunt in response to the source of carbon. When bacteria are grown on glucose, IDH is fully active and unphosphorylated, but when grown on acetate or ethanol, the activity of IDH declines drastically concomitant with its phosphorylation.</text>
</comment>
<comment type="catalytic activity">
    <reaction evidence="1">
        <text>L-seryl-[isocitrate dehydrogenase] + ATP = O-phospho-L-seryl-[isocitrate dehydrogenase] + ADP + H(+)</text>
        <dbReference type="Rhea" id="RHEA:43540"/>
        <dbReference type="Rhea" id="RHEA-COMP:10605"/>
        <dbReference type="Rhea" id="RHEA-COMP:10606"/>
        <dbReference type="ChEBI" id="CHEBI:15378"/>
        <dbReference type="ChEBI" id="CHEBI:29999"/>
        <dbReference type="ChEBI" id="CHEBI:30616"/>
        <dbReference type="ChEBI" id="CHEBI:83421"/>
        <dbReference type="ChEBI" id="CHEBI:456216"/>
        <dbReference type="EC" id="2.7.11.5"/>
    </reaction>
</comment>
<comment type="subcellular location">
    <subcellularLocation>
        <location evidence="1">Cytoplasm</location>
    </subcellularLocation>
</comment>
<comment type="similarity">
    <text evidence="1">Belongs to the AceK family.</text>
</comment>
<proteinExistence type="inferred from homology"/>
<organism>
    <name type="scientific">Burkholderia orbicola (strain AU 1054)</name>
    <dbReference type="NCBI Taxonomy" id="331271"/>
    <lineage>
        <taxon>Bacteria</taxon>
        <taxon>Pseudomonadati</taxon>
        <taxon>Pseudomonadota</taxon>
        <taxon>Betaproteobacteria</taxon>
        <taxon>Burkholderiales</taxon>
        <taxon>Burkholderiaceae</taxon>
        <taxon>Burkholderia</taxon>
        <taxon>Burkholderia cepacia complex</taxon>
        <taxon>Burkholderia orbicola</taxon>
    </lineage>
</organism>
<evidence type="ECO:0000255" key="1">
    <source>
        <dbReference type="HAMAP-Rule" id="MF_00747"/>
    </source>
</evidence>
<sequence>MNHFPKLLSSQIGFDVAQTMLEYFDRHYRIFREAAVDAKTLFERGDWHGLQRLARERITSYDERVKECVEVLEDEYDAENIDDEVWQQIKLHYIGLLTSHRQPECAETFFNSVCCKILHRSYFSNDFIFVRPAISTEYLENDEPAAKPTYRAYYPGTDGLAVTLERIVTNFQLDPPFEDLTRDIGCVMQAIDDEFGHFDEAPNFQIHVLSSLFFRNKSAYIVGRIINADRVLPFAVPIRHVRPGVLALDTVLLRRDLLQIIFSFSHSYFLVDMGVPSAYVDFLCTIMPGKPKAEIYTSVGLQKQGKNLFYRDLLHHLSHSSDRFIIAPGIKGLVMLVFTLPSFPYVFKIIKDHFPPPKETTRAQIMEKYQLVKRHDRLGRMADTLEYSSVALPLARLDHALVRELEKEVPSLLEYEDDKLVIKHLYIERRMTPLNLYLQNGSDADVEHGVKEYGNAVKELMKANIFPGDMLYKNFGVTRHGRVVFYDYDEIEYLTDCNVRRVPPPRNEEDELSGEPWYTVGPHDIFPETYGPFLLGDPRVRSVFMKHHADFFDPALWQASKDKLMQGELPDFYPYDATLRFSVRYPARFGATGENDGAGDAQRAA</sequence>